<proteinExistence type="evidence at protein level"/>
<protein>
    <recommendedName>
        <fullName evidence="1">Carboxysome shell vertex protein CcmL</fullName>
    </recommendedName>
    <alternativeName>
        <fullName evidence="1">Carbon dioxide concentrating mechanism protein CcmL</fullName>
    </alternativeName>
</protein>
<evidence type="ECO:0000255" key="1">
    <source>
        <dbReference type="HAMAP-Rule" id="MF_00858"/>
    </source>
</evidence>
<evidence type="ECO:0000269" key="2">
    <source>
    </source>
</evidence>
<evidence type="ECO:0000269" key="3">
    <source>
    </source>
</evidence>
<evidence type="ECO:0000305" key="4">
    <source>
    </source>
</evidence>
<evidence type="ECO:0000305" key="5">
    <source>
    </source>
</evidence>
<evidence type="ECO:0007744" key="6">
    <source>
        <dbReference type="PDB" id="2QW7"/>
    </source>
</evidence>
<evidence type="ECO:0007829" key="7">
    <source>
        <dbReference type="PDB" id="2QW7"/>
    </source>
</evidence>
<sequence>MQLAKVLGTVVSTSKTPNLTGVKLLLVQFLDTKGQPLERYEVAGDVVGAGLNEWVLVARGSAARKERGNGDRPLDAMVVGIIDTVNVASGSLYNKRDDGR</sequence>
<reference key="1">
    <citation type="journal article" date="1996" name="DNA Res.">
        <title>Sequence analysis of the genome of the unicellular cyanobacterium Synechocystis sp. strain PCC6803. II. Sequence determination of the entire genome and assignment of potential protein-coding regions.</title>
        <authorList>
            <person name="Kaneko T."/>
            <person name="Sato S."/>
            <person name="Kotani H."/>
            <person name="Tanaka A."/>
            <person name="Asamizu E."/>
            <person name="Nakamura Y."/>
            <person name="Miyajima N."/>
            <person name="Hirosawa M."/>
            <person name="Sugiura M."/>
            <person name="Sasamoto S."/>
            <person name="Kimura T."/>
            <person name="Hosouchi T."/>
            <person name="Matsuno A."/>
            <person name="Muraki A."/>
            <person name="Nakazaki N."/>
            <person name="Naruo K."/>
            <person name="Okumura S."/>
            <person name="Shimpo S."/>
            <person name="Takeuchi C."/>
            <person name="Wada T."/>
            <person name="Watanabe A."/>
            <person name="Yamada M."/>
            <person name="Yasuda M."/>
            <person name="Tabata S."/>
        </authorList>
    </citation>
    <scope>NUCLEOTIDE SEQUENCE [LARGE SCALE GENOMIC DNA]</scope>
    <source>
        <strain>ATCC 27184 / PCC 6803 / Kazusa</strain>
    </source>
</reference>
<reference key="2">
    <citation type="journal article" date="2008" name="J. Bacteriol.">
        <title>A multiprotein bicarbonate dehydration complex essential to carboxysome function in cyanobacteria.</title>
        <authorList>
            <person name="Cot S.S."/>
            <person name="So A.K."/>
            <person name="Espie G.S."/>
        </authorList>
    </citation>
    <scope>INTERACTION WITH CCMM</scope>
    <source>
        <strain>ATCC 27184 / PCC 6803 / Kazusa</strain>
    </source>
</reference>
<reference evidence="6" key="3">
    <citation type="journal article" date="2008" name="Science">
        <title>Atomic-level models of the bacterial carboxysome shell.</title>
        <authorList>
            <person name="Tanaka S."/>
            <person name="Kerfeld C.A."/>
            <person name="Sawaya M.R."/>
            <person name="Cai F."/>
            <person name="Heinhorst S."/>
            <person name="Cannon G.C."/>
            <person name="Yeates T.O."/>
        </authorList>
    </citation>
    <scope>X-RAY CRYSTALLOGRAPHY (2.40 ANGSTROMS)</scope>
    <scope>FUNCTION</scope>
    <scope>SUBUNIT</scope>
    <scope>SUBCELLULAR LOCATION</scope>
    <scope>DOMAIN</scope>
    <source>
        <strain>ATCC 27184 / PCC 6803 / Kazusa</strain>
    </source>
</reference>
<organism>
    <name type="scientific">Synechocystis sp. (strain ATCC 27184 / PCC 6803 / Kazusa)</name>
    <dbReference type="NCBI Taxonomy" id="1111708"/>
    <lineage>
        <taxon>Bacteria</taxon>
        <taxon>Bacillati</taxon>
        <taxon>Cyanobacteriota</taxon>
        <taxon>Cyanophyceae</taxon>
        <taxon>Synechococcales</taxon>
        <taxon>Merismopediaceae</taxon>
        <taxon>Synechocystis</taxon>
    </lineage>
</organism>
<name>CCML_SYNY3</name>
<comment type="function">
    <text evidence="1 5">Probably forms vertices in the carboxysome, a polyhedral inclusion where RuBisCO (ribulose bisphosphate carboxylase, rbcL-rbcS) is sequestered. Has been modeled to induce curvature upon insertion into an otherwise flat hexagonal molecular layer of CcmK subunits.</text>
</comment>
<comment type="subunit">
    <text evidence="1 2 3">Homopentamer (PubMed:18292340). Interacts with full-length CcmM (PubMed:17993516).</text>
</comment>
<comment type="subcellular location">
    <subcellularLocation>
        <location evidence="1 5">Carboxysome</location>
    </subcellularLocation>
    <text evidence="4 5">This cyanobacterium makes beta-type carboxysomes (Probable). Probably forms vertices in the polyhedral carboxysome (Probable).</text>
</comment>
<comment type="domain">
    <text evidence="3">The tight homopentamer forms a pore with an opening of about 5 Angstroms in diameter which opens into a wider tunnel at the base of the truncated pyramid. The pore is positively charged.</text>
</comment>
<comment type="similarity">
    <text evidence="1">Belongs to the CcmL/EutN family. CcmL subfamily.</text>
</comment>
<feature type="chain" id="PRO_0000089427" description="Carboxysome shell vertex protein CcmL">
    <location>
        <begin position="1"/>
        <end position="100"/>
    </location>
</feature>
<feature type="domain" description="BMV" evidence="1">
    <location>
        <begin position="1"/>
        <end position="83"/>
    </location>
</feature>
<feature type="strand" evidence="7">
    <location>
        <begin position="2"/>
        <end position="11"/>
    </location>
</feature>
<feature type="strand" evidence="7">
    <location>
        <begin position="13"/>
        <end position="15"/>
    </location>
</feature>
<feature type="helix" evidence="7">
    <location>
        <begin position="17"/>
        <end position="19"/>
    </location>
</feature>
<feature type="strand" evidence="7">
    <location>
        <begin position="24"/>
        <end position="30"/>
    </location>
</feature>
<feature type="strand" evidence="7">
    <location>
        <begin position="36"/>
        <end position="47"/>
    </location>
</feature>
<feature type="strand" evidence="7">
    <location>
        <begin position="54"/>
        <end position="59"/>
    </location>
</feature>
<feature type="helix" evidence="7">
    <location>
        <begin position="60"/>
        <end position="64"/>
    </location>
</feature>
<feature type="strand" evidence="7">
    <location>
        <begin position="75"/>
        <end position="86"/>
    </location>
</feature>
<feature type="strand" evidence="7">
    <location>
        <begin position="88"/>
        <end position="94"/>
    </location>
</feature>
<gene>
    <name evidence="1" type="primary">ccmL</name>
    <name type="ordered locus">sll1030</name>
</gene>
<accession>P72759</accession>
<dbReference type="EMBL" id="BA000022">
    <property type="protein sequence ID" value="BAA16774.1"/>
    <property type="molecule type" value="Genomic_DNA"/>
</dbReference>
<dbReference type="PIR" id="S74622">
    <property type="entry name" value="S74622"/>
</dbReference>
<dbReference type="PDB" id="2QW7">
    <property type="method" value="X-ray"/>
    <property type="resolution" value="2.40 A"/>
    <property type="chains" value="A/B/C/D/E/F/G/H/I/J=1-100"/>
</dbReference>
<dbReference type="PDBsum" id="2QW7"/>
<dbReference type="SMR" id="P72759"/>
<dbReference type="IntAct" id="P72759">
    <property type="interactions" value="5"/>
</dbReference>
<dbReference type="STRING" id="1148.gene:10497630"/>
<dbReference type="PaxDb" id="1148-1651847"/>
<dbReference type="EnsemblBacteria" id="BAA16774">
    <property type="protein sequence ID" value="BAA16774"/>
    <property type="gene ID" value="BAA16774"/>
</dbReference>
<dbReference type="KEGG" id="syn:sll1030"/>
<dbReference type="eggNOG" id="COG4576">
    <property type="taxonomic scope" value="Bacteria"/>
</dbReference>
<dbReference type="InParanoid" id="P72759"/>
<dbReference type="PhylomeDB" id="P72759"/>
<dbReference type="EvolutionaryTrace" id="P72759"/>
<dbReference type="Proteomes" id="UP000001425">
    <property type="component" value="Chromosome"/>
</dbReference>
<dbReference type="GO" id="GO:0031470">
    <property type="term" value="C:carboxysome"/>
    <property type="evidence" value="ECO:0007669"/>
    <property type="project" value="UniProtKB-SubCell"/>
</dbReference>
<dbReference type="GO" id="GO:0043886">
    <property type="term" value="F:structural constituent of carboxysome shell"/>
    <property type="evidence" value="ECO:0000353"/>
    <property type="project" value="UniProtKB"/>
</dbReference>
<dbReference type="GO" id="GO:0015977">
    <property type="term" value="P:carbon fixation"/>
    <property type="evidence" value="ECO:0007669"/>
    <property type="project" value="UniProtKB-UniRule"/>
</dbReference>
<dbReference type="GO" id="GO:0015979">
    <property type="term" value="P:photosynthesis"/>
    <property type="evidence" value="ECO:0007669"/>
    <property type="project" value="UniProtKB-KW"/>
</dbReference>
<dbReference type="CDD" id="cd01614">
    <property type="entry name" value="EutN_CcmL"/>
    <property type="match status" value="1"/>
</dbReference>
<dbReference type="Gene3D" id="2.40.50.220">
    <property type="entry name" value="EutN/Ccml"/>
    <property type="match status" value="1"/>
</dbReference>
<dbReference type="HAMAP" id="MF_00858">
    <property type="entry name" value="CcmL"/>
    <property type="match status" value="1"/>
</dbReference>
<dbReference type="InterPro" id="IPR046387">
    <property type="entry name" value="CcmL"/>
</dbReference>
<dbReference type="InterPro" id="IPR004992">
    <property type="entry name" value="EutN_CcmL"/>
</dbReference>
<dbReference type="InterPro" id="IPR036677">
    <property type="entry name" value="EutN_CcmL_sf"/>
</dbReference>
<dbReference type="PANTHER" id="PTHR36539:SF1">
    <property type="entry name" value="BACTERIAL MICROCOMPARTMENT SHELL VERTEX PROTEIN EUTN"/>
    <property type="match status" value="1"/>
</dbReference>
<dbReference type="PANTHER" id="PTHR36539">
    <property type="entry name" value="ETHANOLAMINE UTILIZATION PROTEIN EUTN"/>
    <property type="match status" value="1"/>
</dbReference>
<dbReference type="Pfam" id="PF03319">
    <property type="entry name" value="EutN_CcmL"/>
    <property type="match status" value="1"/>
</dbReference>
<dbReference type="SUPFAM" id="SSF159133">
    <property type="entry name" value="EutN/CcmL-like"/>
    <property type="match status" value="1"/>
</dbReference>
<dbReference type="PROSITE" id="PS51932">
    <property type="entry name" value="BMV"/>
    <property type="match status" value="1"/>
</dbReference>
<keyword id="KW-0002">3D-structure</keyword>
<keyword id="KW-1283">Bacterial microcompartment</keyword>
<keyword id="KW-0120">Carbon dioxide fixation</keyword>
<keyword id="KW-1282">Carboxysome</keyword>
<keyword id="KW-0602">Photosynthesis</keyword>
<keyword id="KW-1185">Reference proteome</keyword>